<proteinExistence type="inferred from homology"/>
<organism>
    <name type="scientific">Photobacterium profundum (strain SS9)</name>
    <dbReference type="NCBI Taxonomy" id="298386"/>
    <lineage>
        <taxon>Bacteria</taxon>
        <taxon>Pseudomonadati</taxon>
        <taxon>Pseudomonadota</taxon>
        <taxon>Gammaproteobacteria</taxon>
        <taxon>Vibrionales</taxon>
        <taxon>Vibrionaceae</taxon>
        <taxon>Photobacterium</taxon>
    </lineage>
</organism>
<feature type="chain" id="PRO_0000264583" description="Phosphoribosylformylglycinamidine synthase">
    <location>
        <begin position="1"/>
        <end position="1322"/>
    </location>
</feature>
<feature type="domain" description="Glutamine amidotransferase type-1" evidence="1">
    <location>
        <begin position="1069"/>
        <end position="1322"/>
    </location>
</feature>
<feature type="active site" description="Nucleophile" evidence="1">
    <location>
        <position position="1162"/>
    </location>
</feature>
<feature type="active site" evidence="1">
    <location>
        <position position="1287"/>
    </location>
</feature>
<feature type="active site" evidence="1">
    <location>
        <position position="1289"/>
    </location>
</feature>
<feature type="binding site" evidence="1">
    <location>
        <begin position="307"/>
        <end position="318"/>
    </location>
    <ligand>
        <name>ATP</name>
        <dbReference type="ChEBI" id="CHEBI:30616"/>
    </ligand>
</feature>
<feature type="binding site" evidence="1">
    <location>
        <position position="678"/>
    </location>
    <ligand>
        <name>ATP</name>
        <dbReference type="ChEBI" id="CHEBI:30616"/>
    </ligand>
</feature>
<feature type="binding site" evidence="1">
    <location>
        <position position="718"/>
    </location>
    <ligand>
        <name>Mg(2+)</name>
        <dbReference type="ChEBI" id="CHEBI:18420"/>
    </ligand>
</feature>
<feature type="binding site" evidence="1">
    <location>
        <position position="722"/>
    </location>
    <ligand>
        <name>Mg(2+)</name>
        <dbReference type="ChEBI" id="CHEBI:18420"/>
    </ligand>
</feature>
<feature type="binding site" evidence="1">
    <location>
        <position position="886"/>
    </location>
    <ligand>
        <name>Mg(2+)</name>
        <dbReference type="ChEBI" id="CHEBI:18420"/>
    </ligand>
</feature>
<keyword id="KW-0067">ATP-binding</keyword>
<keyword id="KW-0963">Cytoplasm</keyword>
<keyword id="KW-0315">Glutamine amidotransferase</keyword>
<keyword id="KW-0436">Ligase</keyword>
<keyword id="KW-0460">Magnesium</keyword>
<keyword id="KW-0479">Metal-binding</keyword>
<keyword id="KW-0547">Nucleotide-binding</keyword>
<keyword id="KW-0658">Purine biosynthesis</keyword>
<keyword id="KW-1185">Reference proteome</keyword>
<comment type="function">
    <text evidence="1">Phosphoribosylformylglycinamidine synthase involved in the purines biosynthetic pathway. Catalyzes the ATP-dependent conversion of formylglycinamide ribonucleotide (FGAR) and glutamine to yield formylglycinamidine ribonucleotide (FGAM) and glutamate.</text>
</comment>
<comment type="catalytic activity">
    <reaction evidence="1">
        <text>N(2)-formyl-N(1)-(5-phospho-beta-D-ribosyl)glycinamide + L-glutamine + ATP + H2O = 2-formamido-N(1)-(5-O-phospho-beta-D-ribosyl)acetamidine + L-glutamate + ADP + phosphate + H(+)</text>
        <dbReference type="Rhea" id="RHEA:17129"/>
        <dbReference type="ChEBI" id="CHEBI:15377"/>
        <dbReference type="ChEBI" id="CHEBI:15378"/>
        <dbReference type="ChEBI" id="CHEBI:29985"/>
        <dbReference type="ChEBI" id="CHEBI:30616"/>
        <dbReference type="ChEBI" id="CHEBI:43474"/>
        <dbReference type="ChEBI" id="CHEBI:58359"/>
        <dbReference type="ChEBI" id="CHEBI:147286"/>
        <dbReference type="ChEBI" id="CHEBI:147287"/>
        <dbReference type="ChEBI" id="CHEBI:456216"/>
        <dbReference type="EC" id="6.3.5.3"/>
    </reaction>
</comment>
<comment type="pathway">
    <text evidence="1">Purine metabolism; IMP biosynthesis via de novo pathway; 5-amino-1-(5-phospho-D-ribosyl)imidazole from N(2)-formyl-N(1)-(5-phospho-D-ribosyl)glycinamide: step 1/2.</text>
</comment>
<comment type="subunit">
    <text evidence="1">Monomer.</text>
</comment>
<comment type="subcellular location">
    <subcellularLocation>
        <location evidence="1">Cytoplasm</location>
    </subcellularLocation>
</comment>
<comment type="similarity">
    <text evidence="1">In the N-terminal section; belongs to the FGAMS family.</text>
</comment>
<gene>
    <name evidence="1" type="primary">purL</name>
    <name type="ordered locus">PBPRA0788</name>
</gene>
<accession>Q6LU24</accession>
<dbReference type="EC" id="6.3.5.3" evidence="1"/>
<dbReference type="EMBL" id="CR378665">
    <property type="protein sequence ID" value="CAG19201.1"/>
    <property type="molecule type" value="Genomic_DNA"/>
</dbReference>
<dbReference type="RefSeq" id="WP_011217543.1">
    <property type="nucleotide sequence ID" value="NC_006370.1"/>
</dbReference>
<dbReference type="SMR" id="Q6LU24"/>
<dbReference type="STRING" id="298386.PBPRA0788"/>
<dbReference type="KEGG" id="ppr:PBPRA0788"/>
<dbReference type="eggNOG" id="COG0046">
    <property type="taxonomic scope" value="Bacteria"/>
</dbReference>
<dbReference type="eggNOG" id="COG0047">
    <property type="taxonomic scope" value="Bacteria"/>
</dbReference>
<dbReference type="HOGENOM" id="CLU_001031_0_2_6"/>
<dbReference type="UniPathway" id="UPA00074">
    <property type="reaction ID" value="UER00128"/>
</dbReference>
<dbReference type="Proteomes" id="UP000000593">
    <property type="component" value="Chromosome 1"/>
</dbReference>
<dbReference type="GO" id="GO:0005737">
    <property type="term" value="C:cytoplasm"/>
    <property type="evidence" value="ECO:0007669"/>
    <property type="project" value="UniProtKB-SubCell"/>
</dbReference>
<dbReference type="GO" id="GO:0005524">
    <property type="term" value="F:ATP binding"/>
    <property type="evidence" value="ECO:0007669"/>
    <property type="project" value="UniProtKB-UniRule"/>
</dbReference>
<dbReference type="GO" id="GO:0046872">
    <property type="term" value="F:metal ion binding"/>
    <property type="evidence" value="ECO:0007669"/>
    <property type="project" value="UniProtKB-KW"/>
</dbReference>
<dbReference type="GO" id="GO:0004642">
    <property type="term" value="F:phosphoribosylformylglycinamidine synthase activity"/>
    <property type="evidence" value="ECO:0007669"/>
    <property type="project" value="UniProtKB-UniRule"/>
</dbReference>
<dbReference type="GO" id="GO:0006189">
    <property type="term" value="P:'de novo' IMP biosynthetic process"/>
    <property type="evidence" value="ECO:0007669"/>
    <property type="project" value="UniProtKB-UniRule"/>
</dbReference>
<dbReference type="CDD" id="cd01740">
    <property type="entry name" value="GATase1_FGAR_AT"/>
    <property type="match status" value="1"/>
</dbReference>
<dbReference type="CDD" id="cd02203">
    <property type="entry name" value="PurL_repeat1"/>
    <property type="match status" value="1"/>
</dbReference>
<dbReference type="CDD" id="cd02204">
    <property type="entry name" value="PurL_repeat2"/>
    <property type="match status" value="1"/>
</dbReference>
<dbReference type="FunFam" id="1.10.8.750:FF:000002">
    <property type="entry name" value="Phosphoribosylformylglycinamidine synthase"/>
    <property type="match status" value="1"/>
</dbReference>
<dbReference type="FunFam" id="3.30.1330.10:FF:000002">
    <property type="entry name" value="Phosphoribosylformylglycinamidine synthase"/>
    <property type="match status" value="1"/>
</dbReference>
<dbReference type="FunFam" id="3.30.1330.10:FF:000005">
    <property type="entry name" value="Phosphoribosylformylglycinamidine synthase"/>
    <property type="match status" value="1"/>
</dbReference>
<dbReference type="FunFam" id="3.40.50.880:FF:000008">
    <property type="entry name" value="Phosphoribosylformylglycinamidine synthase"/>
    <property type="match status" value="1"/>
</dbReference>
<dbReference type="FunFam" id="3.90.650.10:FF:000002">
    <property type="entry name" value="Phosphoribosylformylglycinamidine synthase"/>
    <property type="match status" value="1"/>
</dbReference>
<dbReference type="FunFam" id="3.90.650.10:FF:000005">
    <property type="entry name" value="Phosphoribosylformylglycinamidine synthase"/>
    <property type="match status" value="1"/>
</dbReference>
<dbReference type="Gene3D" id="3.40.50.880">
    <property type="match status" value="1"/>
</dbReference>
<dbReference type="Gene3D" id="1.10.8.750">
    <property type="entry name" value="Phosphoribosylformylglycinamidine synthase, linker domain"/>
    <property type="match status" value="1"/>
</dbReference>
<dbReference type="Gene3D" id="3.90.650.10">
    <property type="entry name" value="PurM-like C-terminal domain"/>
    <property type="match status" value="2"/>
</dbReference>
<dbReference type="Gene3D" id="3.30.1330.10">
    <property type="entry name" value="PurM-like, N-terminal domain"/>
    <property type="match status" value="2"/>
</dbReference>
<dbReference type="HAMAP" id="MF_00419">
    <property type="entry name" value="PurL_1"/>
    <property type="match status" value="1"/>
</dbReference>
<dbReference type="InterPro" id="IPR029062">
    <property type="entry name" value="Class_I_gatase-like"/>
</dbReference>
<dbReference type="InterPro" id="IPR040707">
    <property type="entry name" value="FGAR-AT_N"/>
</dbReference>
<dbReference type="InterPro" id="IPR055181">
    <property type="entry name" value="FGAR-AT_PurM_N-like"/>
</dbReference>
<dbReference type="InterPro" id="IPR010073">
    <property type="entry name" value="PurL_large"/>
</dbReference>
<dbReference type="InterPro" id="IPR041609">
    <property type="entry name" value="PurL_linker"/>
</dbReference>
<dbReference type="InterPro" id="IPR010918">
    <property type="entry name" value="PurM-like_C_dom"/>
</dbReference>
<dbReference type="InterPro" id="IPR036676">
    <property type="entry name" value="PurM-like_C_sf"/>
</dbReference>
<dbReference type="InterPro" id="IPR036921">
    <property type="entry name" value="PurM-like_N_sf"/>
</dbReference>
<dbReference type="InterPro" id="IPR036604">
    <property type="entry name" value="PurS-like_sf"/>
</dbReference>
<dbReference type="NCBIfam" id="TIGR01735">
    <property type="entry name" value="FGAM_synt"/>
    <property type="match status" value="1"/>
</dbReference>
<dbReference type="NCBIfam" id="NF003672">
    <property type="entry name" value="PRK05297.1"/>
    <property type="match status" value="1"/>
</dbReference>
<dbReference type="PANTHER" id="PTHR10099">
    <property type="entry name" value="PHOSPHORIBOSYLFORMYLGLYCINAMIDINE SYNTHASE"/>
    <property type="match status" value="1"/>
</dbReference>
<dbReference type="PANTHER" id="PTHR10099:SF1">
    <property type="entry name" value="PHOSPHORIBOSYLFORMYLGLYCINAMIDINE SYNTHASE"/>
    <property type="match status" value="1"/>
</dbReference>
<dbReference type="Pfam" id="PF02769">
    <property type="entry name" value="AIRS_C"/>
    <property type="match status" value="2"/>
</dbReference>
<dbReference type="Pfam" id="PF18072">
    <property type="entry name" value="FGAR-AT_linker"/>
    <property type="match status" value="1"/>
</dbReference>
<dbReference type="Pfam" id="PF18076">
    <property type="entry name" value="FGAR-AT_N"/>
    <property type="match status" value="1"/>
</dbReference>
<dbReference type="Pfam" id="PF22689">
    <property type="entry name" value="FGAR-AT_PurM_N-like"/>
    <property type="match status" value="1"/>
</dbReference>
<dbReference type="Pfam" id="PF13507">
    <property type="entry name" value="GATase_5"/>
    <property type="match status" value="1"/>
</dbReference>
<dbReference type="SMART" id="SM01211">
    <property type="entry name" value="GATase_5"/>
    <property type="match status" value="1"/>
</dbReference>
<dbReference type="SUPFAM" id="SSF52317">
    <property type="entry name" value="Class I glutamine amidotransferase-like"/>
    <property type="match status" value="1"/>
</dbReference>
<dbReference type="SUPFAM" id="SSF109736">
    <property type="entry name" value="FGAM synthase PurL, linker domain"/>
    <property type="match status" value="1"/>
</dbReference>
<dbReference type="SUPFAM" id="SSF56042">
    <property type="entry name" value="PurM C-terminal domain-like"/>
    <property type="match status" value="2"/>
</dbReference>
<dbReference type="SUPFAM" id="SSF55326">
    <property type="entry name" value="PurM N-terminal domain-like"/>
    <property type="match status" value="2"/>
</dbReference>
<dbReference type="SUPFAM" id="SSF82697">
    <property type="entry name" value="PurS-like"/>
    <property type="match status" value="1"/>
</dbReference>
<dbReference type="PROSITE" id="PS51273">
    <property type="entry name" value="GATASE_TYPE_1"/>
    <property type="match status" value="1"/>
</dbReference>
<evidence type="ECO:0000255" key="1">
    <source>
        <dbReference type="HAMAP-Rule" id="MF_00419"/>
    </source>
</evidence>
<sequence length="1322" mass="144157">MEILRGSPALSEFRVNKLLERCRELDLPVSGIYAEFMHFADVSAPLNSDEQSKLASLLTYGPTIAEHEPTGTMLLVTPRPGTISPWSSKSTDIAQNCALGNVKRLERGTAYYVEVTADLTNAQLTDLKALIHDRMMEVVFTDVDSAAALFTQAEPAPVQSVDILVGGRKALEDANLKLGLALAEDEIDYLVENFTMLGRNPNDIELMMFAQANSEHCRHKIFNADWTIDGVEQEKSLFKMIKNTYEKNHEHVLSAYKDNAAVMEGSEVGRFFPNPESRQYNYHQEAAHILMKVETHNHPTAISPWPGASTGSGGEIRDEGATGLGGKPKAGLVGFTVSNLRVPGFEQPWETDFGKPGRIVNALEIMLEGPLGGAAFNNEFGRPNLLGYFRTYEEKVTSHNGEEIRGYHKPIMIAGGMGNIRADHVQKKEIPVGAKLIVLGGPAMNIGLGGGAASSMASGQSAEDLDFASVQRENPEMERRCQEVIDRCWQMGDANPIAFIHDVGAGGISNALPELVDDGERGGKFQLRNVPNDEPGMSPLEIWCNESQERYVMAVAPENLAVFEAICKRERAPFAVVGEATEERHLTLEDEHFDNTPIDMPMDILLGKAPKMHRDAKTLKVEGQAIDRSGIELEAATQRVLRLPAVAEKTFLITIGDRSVTGLVARDQMVGPWQVPVANCAVTAASYDTYHGEAMSMGERTPVALLDFGASARLAVGEAITNIASADIGDMKRINLSANWMSPAGHPGEDAGLYEAVKAVGEELCPALGLTIPVGKDSMSMKTKWEQDGEQKEVTSPLSLVITAFGRVEDVRKTVTPQLRTDKGESSLILIDLGCGQNRLGATALAQVYKQLGDKPADVDNPELLKGFFYAVQALVRDEKVLAYHDRGDGGLYVTLAEMAFAGHTGVEVDINTSESDACDDVLAMLFNEELGAVLQVRTEDLDTVKSVLAEHGLTACSHVIGTVVDEDVVRIWNGNDRVLEQSRTDLRTVWAETTYQMQAMRDNPAGALQEFEAKKDNSDPGLSAQLTFDINEDVAAPFIAAPFITKAPKTGASVVNAPAINLGAKPQMAILREQGVNSHVEMAAAFDRAGFEATDVHMSDILSGNVQLEGFNGLVACGGFSYGDVLGAGEGWAKSVLFNNIARDQFEAFFKRNDTFSLGVCNGCQMMSNLSELIPGSDLWPRFVRNESERFEARFSLVEVQKSDSLFFNEMAGSRMPIAVSHGEGRVEVRNGEHLNAIEQSGTVALRYLDNFGNVTQNYPANPNGSPNGITGLTTMDGRVTIMMPHPERVFRTVANSWHPDDWNENSPWMRMFRNARVNLG</sequence>
<name>PUR4_PHOPR</name>
<protein>
    <recommendedName>
        <fullName evidence="1">Phosphoribosylformylglycinamidine synthase</fullName>
        <shortName evidence="1">FGAM synthase</shortName>
        <shortName evidence="1">FGAMS</shortName>
        <ecNumber evidence="1">6.3.5.3</ecNumber>
    </recommendedName>
    <alternativeName>
        <fullName evidence="1">Formylglycinamide ribonucleotide amidotransferase</fullName>
        <shortName evidence="1">FGAR amidotransferase</shortName>
        <shortName evidence="1">FGAR-AT</shortName>
    </alternativeName>
</protein>
<reference key="1">
    <citation type="journal article" date="2005" name="Science">
        <title>Life at depth: Photobacterium profundum genome sequence and expression analysis.</title>
        <authorList>
            <person name="Vezzi A."/>
            <person name="Campanaro S."/>
            <person name="D'Angelo M."/>
            <person name="Simonato F."/>
            <person name="Vitulo N."/>
            <person name="Lauro F.M."/>
            <person name="Cestaro A."/>
            <person name="Malacrida G."/>
            <person name="Simionati B."/>
            <person name="Cannata N."/>
            <person name="Romualdi C."/>
            <person name="Bartlett D.H."/>
            <person name="Valle G."/>
        </authorList>
    </citation>
    <scope>NUCLEOTIDE SEQUENCE [LARGE SCALE GENOMIC DNA]</scope>
    <source>
        <strain>ATCC BAA-1253 / SS9</strain>
    </source>
</reference>